<proteinExistence type="inferred from homology"/>
<accession>A8A6K1</accession>
<gene>
    <name evidence="1" type="primary">atpB</name>
    <name type="ordered locus">EcHS_A3954</name>
</gene>
<sequence>MASENMTPQDYIGHHLNNLQLDLRTFSLVDPQNPPATFWTINIDSMFFSVVLGLLFLVLFRSVAKKATSGVPGKFQTAIELVIGFVNGSVKDMYHGKSKLIAPLALTIFVWVFLMNLMDLLPIDLLPYIAEHVLGLPALRVVPSADVNVTLSMALGVFILILFYSIKMKGIGGFTKELTLQPFNHWAFIPVNLILEGVSLLSKPVSLGLRLFGNMYAGELIFILIAGLLPWWSQWILNVPWAIFHILIITLQAFIFMVLTIVYLSMASEEH</sequence>
<keyword id="KW-0066">ATP synthesis</keyword>
<keyword id="KW-0997">Cell inner membrane</keyword>
<keyword id="KW-1003">Cell membrane</keyword>
<keyword id="KW-0138">CF(0)</keyword>
<keyword id="KW-0375">Hydrogen ion transport</keyword>
<keyword id="KW-0406">Ion transport</keyword>
<keyword id="KW-0472">Membrane</keyword>
<keyword id="KW-0812">Transmembrane</keyword>
<keyword id="KW-1133">Transmembrane helix</keyword>
<keyword id="KW-0813">Transport</keyword>
<organism>
    <name type="scientific">Escherichia coli O9:H4 (strain HS)</name>
    <dbReference type="NCBI Taxonomy" id="331112"/>
    <lineage>
        <taxon>Bacteria</taxon>
        <taxon>Pseudomonadati</taxon>
        <taxon>Pseudomonadota</taxon>
        <taxon>Gammaproteobacteria</taxon>
        <taxon>Enterobacterales</taxon>
        <taxon>Enterobacteriaceae</taxon>
        <taxon>Escherichia</taxon>
    </lineage>
</organism>
<name>ATP6_ECOHS</name>
<feature type="chain" id="PRO_0000362307" description="ATP synthase subunit a">
    <location>
        <begin position="1"/>
        <end position="271"/>
    </location>
</feature>
<feature type="transmembrane region" description="Helical" evidence="1">
    <location>
        <begin position="40"/>
        <end position="60"/>
    </location>
</feature>
<feature type="transmembrane region" description="Helical" evidence="1">
    <location>
        <begin position="100"/>
        <end position="120"/>
    </location>
</feature>
<feature type="transmembrane region" description="Helical" evidence="1">
    <location>
        <begin position="146"/>
        <end position="166"/>
    </location>
</feature>
<feature type="transmembrane region" description="Helical" evidence="1">
    <location>
        <begin position="220"/>
        <end position="240"/>
    </location>
</feature>
<feature type="transmembrane region" description="Helical" evidence="1">
    <location>
        <begin position="242"/>
        <end position="262"/>
    </location>
</feature>
<evidence type="ECO:0000255" key="1">
    <source>
        <dbReference type="HAMAP-Rule" id="MF_01393"/>
    </source>
</evidence>
<comment type="function">
    <text evidence="1">Key component of the proton channel; it plays a direct role in the translocation of protons across the membrane.</text>
</comment>
<comment type="subunit">
    <text evidence="1">F-type ATPases have 2 components, CF(1) - the catalytic core - and CF(0) - the membrane proton channel. CF(1) has five subunits: alpha(3), beta(3), gamma(1), delta(1), epsilon(1). CF(0) has three main subunits: a(1), b(2) and c(9-12). The alpha and beta chains form an alternating ring which encloses part of the gamma chain. CF(1) is attached to CF(0) by a central stalk formed by the gamma and epsilon chains, while a peripheral stalk is formed by the delta and b chains.</text>
</comment>
<comment type="subcellular location">
    <subcellularLocation>
        <location evidence="1">Cell inner membrane</location>
        <topology evidence="1">Multi-pass membrane protein</topology>
    </subcellularLocation>
</comment>
<comment type="similarity">
    <text evidence="1">Belongs to the ATPase A chain family.</text>
</comment>
<reference key="1">
    <citation type="journal article" date="2008" name="J. Bacteriol.">
        <title>The pangenome structure of Escherichia coli: comparative genomic analysis of E. coli commensal and pathogenic isolates.</title>
        <authorList>
            <person name="Rasko D.A."/>
            <person name="Rosovitz M.J."/>
            <person name="Myers G.S.A."/>
            <person name="Mongodin E.F."/>
            <person name="Fricke W.F."/>
            <person name="Gajer P."/>
            <person name="Crabtree J."/>
            <person name="Sebaihia M."/>
            <person name="Thomson N.R."/>
            <person name="Chaudhuri R."/>
            <person name="Henderson I.R."/>
            <person name="Sperandio V."/>
            <person name="Ravel J."/>
        </authorList>
    </citation>
    <scope>NUCLEOTIDE SEQUENCE [LARGE SCALE GENOMIC DNA]</scope>
    <source>
        <strain>HS</strain>
    </source>
</reference>
<dbReference type="EMBL" id="CP000802">
    <property type="protein sequence ID" value="ABV08155.1"/>
    <property type="molecule type" value="Genomic_DNA"/>
</dbReference>
<dbReference type="RefSeq" id="WP_000135625.1">
    <property type="nucleotide sequence ID" value="NC_009800.1"/>
</dbReference>
<dbReference type="BMRB" id="A8A6K1"/>
<dbReference type="SMR" id="A8A6K1"/>
<dbReference type="GeneID" id="93778229"/>
<dbReference type="KEGG" id="ecx:EcHS_A3954"/>
<dbReference type="HOGENOM" id="CLU_041018_1_0_6"/>
<dbReference type="GO" id="GO:0005886">
    <property type="term" value="C:plasma membrane"/>
    <property type="evidence" value="ECO:0007669"/>
    <property type="project" value="UniProtKB-SubCell"/>
</dbReference>
<dbReference type="GO" id="GO:0045259">
    <property type="term" value="C:proton-transporting ATP synthase complex"/>
    <property type="evidence" value="ECO:0007669"/>
    <property type="project" value="UniProtKB-KW"/>
</dbReference>
<dbReference type="GO" id="GO:0046933">
    <property type="term" value="F:proton-transporting ATP synthase activity, rotational mechanism"/>
    <property type="evidence" value="ECO:0007669"/>
    <property type="project" value="UniProtKB-UniRule"/>
</dbReference>
<dbReference type="GO" id="GO:0042777">
    <property type="term" value="P:proton motive force-driven plasma membrane ATP synthesis"/>
    <property type="evidence" value="ECO:0007669"/>
    <property type="project" value="TreeGrafter"/>
</dbReference>
<dbReference type="CDD" id="cd00310">
    <property type="entry name" value="ATP-synt_Fo_a_6"/>
    <property type="match status" value="1"/>
</dbReference>
<dbReference type="FunFam" id="1.20.120.220:FF:000002">
    <property type="entry name" value="ATP synthase subunit a"/>
    <property type="match status" value="1"/>
</dbReference>
<dbReference type="Gene3D" id="1.20.120.220">
    <property type="entry name" value="ATP synthase, F0 complex, subunit A"/>
    <property type="match status" value="1"/>
</dbReference>
<dbReference type="HAMAP" id="MF_01393">
    <property type="entry name" value="ATP_synth_a_bact"/>
    <property type="match status" value="1"/>
</dbReference>
<dbReference type="InterPro" id="IPR045082">
    <property type="entry name" value="ATP_syn_F0_a_bact/chloroplast"/>
</dbReference>
<dbReference type="InterPro" id="IPR000568">
    <property type="entry name" value="ATP_synth_F0_asu"/>
</dbReference>
<dbReference type="InterPro" id="IPR023011">
    <property type="entry name" value="ATP_synth_F0_asu_AS"/>
</dbReference>
<dbReference type="InterPro" id="IPR035908">
    <property type="entry name" value="F0_ATP_A_sf"/>
</dbReference>
<dbReference type="NCBIfam" id="TIGR01131">
    <property type="entry name" value="ATP_synt_6_or_A"/>
    <property type="match status" value="1"/>
</dbReference>
<dbReference type="NCBIfam" id="NF004477">
    <property type="entry name" value="PRK05815.1-1"/>
    <property type="match status" value="1"/>
</dbReference>
<dbReference type="PANTHER" id="PTHR42823">
    <property type="entry name" value="ATP SYNTHASE SUBUNIT A, CHLOROPLASTIC"/>
    <property type="match status" value="1"/>
</dbReference>
<dbReference type="PANTHER" id="PTHR42823:SF3">
    <property type="entry name" value="ATP SYNTHASE SUBUNIT A, CHLOROPLASTIC"/>
    <property type="match status" value="1"/>
</dbReference>
<dbReference type="Pfam" id="PF00119">
    <property type="entry name" value="ATP-synt_A"/>
    <property type="match status" value="1"/>
</dbReference>
<dbReference type="PRINTS" id="PR00123">
    <property type="entry name" value="ATPASEA"/>
</dbReference>
<dbReference type="SUPFAM" id="SSF81336">
    <property type="entry name" value="F1F0 ATP synthase subunit A"/>
    <property type="match status" value="1"/>
</dbReference>
<dbReference type="PROSITE" id="PS00449">
    <property type="entry name" value="ATPASE_A"/>
    <property type="match status" value="1"/>
</dbReference>
<protein>
    <recommendedName>
        <fullName evidence="1">ATP synthase subunit a</fullName>
    </recommendedName>
    <alternativeName>
        <fullName evidence="1">ATP synthase F0 sector subunit a</fullName>
    </alternativeName>
    <alternativeName>
        <fullName evidence="1">F-ATPase subunit 6</fullName>
    </alternativeName>
</protein>